<sequence length="782" mass="86701">MAPSAWAICWLLGGLLLHGGSSGPSPGPSVPRLRLSYRDLLSANRSAIFLGPQGSLNLQAMYLDEYRDRLFLGGLDALYSLRLDQAWPDPREVLWPPQPGQREECVRKGRDPLTECANFVRVLQPHNRTHLLACGTGAFQPTCALITVGHRGEHVLHLEPGSVESGRGRCPHEPSRPFASTFIDGELYTGLTADFLGREAMIFRSGGPRPALRSDSDQSLLHDPRFVMAARIPENSDQDNDKVYFFFSETVPSPDGGSNHVTVSRVGRVCVNDAGGQRVLVNKWSTFLKARLVCSVPGPGGAETHFDQLEDVFLLWPKAGKSLEVYALFSTVSAVFQGFAVCVYHMADIWEVFNGPFAHRDGPQHQWGPYGGKVPFPRPGVCPSKMTAQPGRPFGSTKDYPDEVLQFARAHPLMFWPVRPRHGRPVLVKTHLAQQLHQIVVDRVEAEDGTYDVIFLGTDSGSVLKVIALQAGGSAEPEEVVLEELQVFKVPTPITEMEISVKRQMLYVGSRLGVAQLRLHQCETYGTACAECCLARDPYCAWDGASCTHYRPSLGKRRFRRQDIRHGNPALQCLGQSQEEEAVGLVAATMVYGTEHNSTFLECLPKSPQAAVRWLLQRPGDEGPDQVKTDERVLHTERGLLFRRLSRFDAGTYTCTTLEHGFSQTVVRLALVVIVASQLDNLFPPEPKPEEPPARGGLASTPPKAWYKDILQLIGFANLPRVDEYCERVWCRGTTECSGCFRSRSRGKQARGKSWAGLELGKKMKSRVHAEHNRTPREVEAT</sequence>
<reference key="1">
    <citation type="submission" date="1999-07" db="EMBL/GenBank/DDBJ databases">
        <title>Human semaphorin.</title>
        <authorList>
            <person name="Seki N."/>
            <person name="Hattori A."/>
            <person name="Hayashi A."/>
            <person name="Kozuma S."/>
            <person name="Muramatsu M."/>
            <person name="Miyajima N."/>
            <person name="Saito T."/>
        </authorList>
    </citation>
    <scope>NUCLEOTIDE SEQUENCE [MRNA]</scope>
</reference>
<reference key="2">
    <citation type="journal article" date="2004" name="Nat. Genet.">
        <title>Complete sequencing and characterization of 21,243 full-length human cDNAs.</title>
        <authorList>
            <person name="Ota T."/>
            <person name="Suzuki Y."/>
            <person name="Nishikawa T."/>
            <person name="Otsuki T."/>
            <person name="Sugiyama T."/>
            <person name="Irie R."/>
            <person name="Wakamatsu A."/>
            <person name="Hayashi K."/>
            <person name="Sato H."/>
            <person name="Nagai K."/>
            <person name="Kimura K."/>
            <person name="Makita H."/>
            <person name="Sekine M."/>
            <person name="Obayashi M."/>
            <person name="Nishi T."/>
            <person name="Shibahara T."/>
            <person name="Tanaka T."/>
            <person name="Ishii S."/>
            <person name="Yamamoto J."/>
            <person name="Saito K."/>
            <person name="Kawai Y."/>
            <person name="Isono Y."/>
            <person name="Nakamura Y."/>
            <person name="Nagahari K."/>
            <person name="Murakami K."/>
            <person name="Yasuda T."/>
            <person name="Iwayanagi T."/>
            <person name="Wagatsuma M."/>
            <person name="Shiratori A."/>
            <person name="Sudo H."/>
            <person name="Hosoiri T."/>
            <person name="Kaku Y."/>
            <person name="Kodaira H."/>
            <person name="Kondo H."/>
            <person name="Sugawara M."/>
            <person name="Takahashi M."/>
            <person name="Kanda K."/>
            <person name="Yokoi T."/>
            <person name="Furuya T."/>
            <person name="Kikkawa E."/>
            <person name="Omura Y."/>
            <person name="Abe K."/>
            <person name="Kamihara K."/>
            <person name="Katsuta N."/>
            <person name="Sato K."/>
            <person name="Tanikawa M."/>
            <person name="Yamazaki M."/>
            <person name="Ninomiya K."/>
            <person name="Ishibashi T."/>
            <person name="Yamashita H."/>
            <person name="Murakawa K."/>
            <person name="Fujimori K."/>
            <person name="Tanai H."/>
            <person name="Kimata M."/>
            <person name="Watanabe M."/>
            <person name="Hiraoka S."/>
            <person name="Chiba Y."/>
            <person name="Ishida S."/>
            <person name="Ono Y."/>
            <person name="Takiguchi S."/>
            <person name="Watanabe S."/>
            <person name="Yosida M."/>
            <person name="Hotuta T."/>
            <person name="Kusano J."/>
            <person name="Kanehori K."/>
            <person name="Takahashi-Fujii A."/>
            <person name="Hara H."/>
            <person name="Tanase T.-O."/>
            <person name="Nomura Y."/>
            <person name="Togiya S."/>
            <person name="Komai F."/>
            <person name="Hara R."/>
            <person name="Takeuchi K."/>
            <person name="Arita M."/>
            <person name="Imose N."/>
            <person name="Musashino K."/>
            <person name="Yuuki H."/>
            <person name="Oshima A."/>
            <person name="Sasaki N."/>
            <person name="Aotsuka S."/>
            <person name="Yoshikawa Y."/>
            <person name="Matsunawa H."/>
            <person name="Ichihara T."/>
            <person name="Shiohata N."/>
            <person name="Sano S."/>
            <person name="Moriya S."/>
            <person name="Momiyama H."/>
            <person name="Satoh N."/>
            <person name="Takami S."/>
            <person name="Terashima Y."/>
            <person name="Suzuki O."/>
            <person name="Nakagawa S."/>
            <person name="Senoh A."/>
            <person name="Mizoguchi H."/>
            <person name="Goto Y."/>
            <person name="Shimizu F."/>
            <person name="Wakebe H."/>
            <person name="Hishigaki H."/>
            <person name="Watanabe T."/>
            <person name="Sugiyama A."/>
            <person name="Takemoto M."/>
            <person name="Kawakami B."/>
            <person name="Yamazaki M."/>
            <person name="Watanabe K."/>
            <person name="Kumagai A."/>
            <person name="Itakura S."/>
            <person name="Fukuzumi Y."/>
            <person name="Fujimori Y."/>
            <person name="Komiyama M."/>
            <person name="Tashiro H."/>
            <person name="Tanigami A."/>
            <person name="Fujiwara T."/>
            <person name="Ono T."/>
            <person name="Yamada K."/>
            <person name="Fujii Y."/>
            <person name="Ozaki K."/>
            <person name="Hirao M."/>
            <person name="Ohmori Y."/>
            <person name="Kawabata A."/>
            <person name="Hikiji T."/>
            <person name="Kobatake N."/>
            <person name="Inagaki H."/>
            <person name="Ikema Y."/>
            <person name="Okamoto S."/>
            <person name="Okitani R."/>
            <person name="Kawakami T."/>
            <person name="Noguchi S."/>
            <person name="Itoh T."/>
            <person name="Shigeta K."/>
            <person name="Senba T."/>
            <person name="Matsumura K."/>
            <person name="Nakajima Y."/>
            <person name="Mizuno T."/>
            <person name="Morinaga M."/>
            <person name="Sasaki M."/>
            <person name="Togashi T."/>
            <person name="Oyama M."/>
            <person name="Hata H."/>
            <person name="Watanabe M."/>
            <person name="Komatsu T."/>
            <person name="Mizushima-Sugano J."/>
            <person name="Satoh T."/>
            <person name="Shirai Y."/>
            <person name="Takahashi Y."/>
            <person name="Nakagawa K."/>
            <person name="Okumura K."/>
            <person name="Nagase T."/>
            <person name="Nomura N."/>
            <person name="Kikuchi H."/>
            <person name="Masuho Y."/>
            <person name="Yamashita R."/>
            <person name="Nakai K."/>
            <person name="Yada T."/>
            <person name="Nakamura Y."/>
            <person name="Ohara O."/>
            <person name="Isogai T."/>
            <person name="Sugano S."/>
        </authorList>
    </citation>
    <scope>NUCLEOTIDE SEQUENCE [LARGE SCALE MRNA]</scope>
    <source>
        <tissue>Spleen</tissue>
    </source>
</reference>
<reference key="3">
    <citation type="journal article" date="2004" name="Genome Res.">
        <title>The status, quality, and expansion of the NIH full-length cDNA project: the Mammalian Gene Collection (MGC).</title>
        <authorList>
            <consortium name="The MGC Project Team"/>
        </authorList>
    </citation>
    <scope>NUCLEOTIDE SEQUENCE [LARGE SCALE MRNA]</scope>
</reference>
<protein>
    <recommendedName>
        <fullName>Semaphorin-3G</fullName>
    </recommendedName>
    <alternativeName>
        <fullName>Semaphorin sem2</fullName>
    </alternativeName>
</protein>
<evidence type="ECO:0000250" key="1"/>
<evidence type="ECO:0000255" key="2"/>
<evidence type="ECO:0000255" key="3">
    <source>
        <dbReference type="PROSITE-ProRule" id="PRU00352"/>
    </source>
</evidence>
<evidence type="ECO:0000305" key="4"/>
<accession>Q9NS98</accession>
<accession>Q7L9D9</accession>
<accession>Q9H7Q3</accession>
<organism>
    <name type="scientific">Homo sapiens</name>
    <name type="common">Human</name>
    <dbReference type="NCBI Taxonomy" id="9606"/>
    <lineage>
        <taxon>Eukaryota</taxon>
        <taxon>Metazoa</taxon>
        <taxon>Chordata</taxon>
        <taxon>Craniata</taxon>
        <taxon>Vertebrata</taxon>
        <taxon>Euteleostomi</taxon>
        <taxon>Mammalia</taxon>
        <taxon>Eutheria</taxon>
        <taxon>Euarchontoglires</taxon>
        <taxon>Primates</taxon>
        <taxon>Haplorrhini</taxon>
        <taxon>Catarrhini</taxon>
        <taxon>Hominidae</taxon>
        <taxon>Homo</taxon>
    </lineage>
</organism>
<gene>
    <name type="primary">SEMA3G</name>
</gene>
<comment type="function">
    <text evidence="1">Has chemorepulsive activities for sympathetic axons. Ligand of NRP2 (By similarity).</text>
</comment>
<comment type="interaction">
    <interactant intactId="EBI-17574989">
        <id>Q9NS98</id>
    </interactant>
    <interactant intactId="EBI-12878374">
        <id>Q9BSY9</id>
        <label>DESI2</label>
    </interactant>
    <organismsDiffer>false</organismsDiffer>
    <experiments>3</experiments>
</comment>
<comment type="subcellular location">
    <subcellularLocation>
        <location evidence="1">Secreted</location>
    </subcellularLocation>
</comment>
<comment type="similarity">
    <text evidence="4">Belongs to the semaphorin family.</text>
</comment>
<dbReference type="EMBL" id="AB029496">
    <property type="protein sequence ID" value="BAA98132.1"/>
    <property type="molecule type" value="mRNA"/>
</dbReference>
<dbReference type="EMBL" id="AK024425">
    <property type="protein sequence ID" value="BAB15715.1"/>
    <property type="molecule type" value="mRNA"/>
</dbReference>
<dbReference type="EMBL" id="BC098104">
    <property type="protein sequence ID" value="AAH98104.1"/>
    <property type="molecule type" value="mRNA"/>
</dbReference>
<dbReference type="EMBL" id="BC098137">
    <property type="protein sequence ID" value="AAH98137.1"/>
    <property type="molecule type" value="mRNA"/>
</dbReference>
<dbReference type="EMBL" id="BC099724">
    <property type="protein sequence ID" value="AAH99724.1"/>
    <property type="molecule type" value="mRNA"/>
</dbReference>
<dbReference type="CCDS" id="CCDS2856.1"/>
<dbReference type="RefSeq" id="NP_064548.1">
    <property type="nucleotide sequence ID" value="NM_020163.3"/>
</dbReference>
<dbReference type="SMR" id="Q9NS98"/>
<dbReference type="BioGRID" id="121248">
    <property type="interactions" value="7"/>
</dbReference>
<dbReference type="FunCoup" id="Q9NS98">
    <property type="interactions" value="169"/>
</dbReference>
<dbReference type="IntAct" id="Q9NS98">
    <property type="interactions" value="1"/>
</dbReference>
<dbReference type="STRING" id="9606.ENSP00000231721"/>
<dbReference type="GlyConnect" id="1732">
    <property type="glycosylation" value="1 N-Linked glycan (1 site)"/>
</dbReference>
<dbReference type="GlyCosmos" id="Q9NS98">
    <property type="glycosylation" value="2 sites, 1 glycan"/>
</dbReference>
<dbReference type="GlyGen" id="Q9NS98">
    <property type="glycosylation" value="2 sites, 2 N-linked glycans (1 site)"/>
</dbReference>
<dbReference type="iPTMnet" id="Q9NS98"/>
<dbReference type="PhosphoSitePlus" id="Q9NS98"/>
<dbReference type="BioMuta" id="SEMA3G"/>
<dbReference type="DMDM" id="74761676"/>
<dbReference type="jPOST" id="Q9NS98"/>
<dbReference type="MassIVE" id="Q9NS98"/>
<dbReference type="PaxDb" id="9606-ENSP00000231721"/>
<dbReference type="PeptideAtlas" id="Q9NS98"/>
<dbReference type="ProteomicsDB" id="82517"/>
<dbReference type="Antibodypedia" id="937">
    <property type="antibodies" value="129 antibodies from 20 providers"/>
</dbReference>
<dbReference type="DNASU" id="56920"/>
<dbReference type="Ensembl" id="ENST00000231721.7">
    <property type="protein sequence ID" value="ENSP00000231721.2"/>
    <property type="gene ID" value="ENSG00000010319.7"/>
</dbReference>
<dbReference type="GeneID" id="56920"/>
<dbReference type="KEGG" id="hsa:56920"/>
<dbReference type="MANE-Select" id="ENST00000231721.7">
    <property type="protein sequence ID" value="ENSP00000231721.2"/>
    <property type="RefSeq nucleotide sequence ID" value="NM_020163.3"/>
    <property type="RefSeq protein sequence ID" value="NP_064548.1"/>
</dbReference>
<dbReference type="UCSC" id="uc003dea.2">
    <property type="organism name" value="human"/>
</dbReference>
<dbReference type="AGR" id="HGNC:30400"/>
<dbReference type="CTD" id="56920"/>
<dbReference type="DisGeNET" id="56920"/>
<dbReference type="GeneCards" id="SEMA3G"/>
<dbReference type="HGNC" id="HGNC:30400">
    <property type="gene designation" value="SEMA3G"/>
</dbReference>
<dbReference type="HPA" id="ENSG00000010319">
    <property type="expression patterns" value="Tissue enhanced (adipose tissue, breast)"/>
</dbReference>
<dbReference type="MIM" id="620997">
    <property type="type" value="gene"/>
</dbReference>
<dbReference type="neXtProt" id="NX_Q9NS98"/>
<dbReference type="OpenTargets" id="ENSG00000010319"/>
<dbReference type="PharmGKB" id="PA142670937"/>
<dbReference type="VEuPathDB" id="HostDB:ENSG00000010319"/>
<dbReference type="eggNOG" id="KOG3611">
    <property type="taxonomic scope" value="Eukaryota"/>
</dbReference>
<dbReference type="GeneTree" id="ENSGT00940000157677"/>
<dbReference type="HOGENOM" id="CLU_009051_5_0_1"/>
<dbReference type="InParanoid" id="Q9NS98"/>
<dbReference type="OMA" id="DLQAMYL"/>
<dbReference type="OrthoDB" id="9988752at2759"/>
<dbReference type="PAN-GO" id="Q9NS98">
    <property type="GO annotations" value="10 GO annotations based on evolutionary models"/>
</dbReference>
<dbReference type="PhylomeDB" id="Q9NS98"/>
<dbReference type="TreeFam" id="TF316102"/>
<dbReference type="PathwayCommons" id="Q9NS98"/>
<dbReference type="SignaLink" id="Q9NS98"/>
<dbReference type="BioGRID-ORCS" id="56920">
    <property type="hits" value="27 hits in 1148 CRISPR screens"/>
</dbReference>
<dbReference type="ChiTaRS" id="SEMA3G">
    <property type="organism name" value="human"/>
</dbReference>
<dbReference type="GenomeRNAi" id="56920"/>
<dbReference type="Pharos" id="Q9NS98">
    <property type="development level" value="Tbio"/>
</dbReference>
<dbReference type="PRO" id="PR:Q9NS98"/>
<dbReference type="Proteomes" id="UP000005640">
    <property type="component" value="Chromosome 3"/>
</dbReference>
<dbReference type="RNAct" id="Q9NS98">
    <property type="molecule type" value="protein"/>
</dbReference>
<dbReference type="Bgee" id="ENSG00000010319">
    <property type="expression patterns" value="Expressed in renal glomerulus and 186 other cell types or tissues"/>
</dbReference>
<dbReference type="ExpressionAtlas" id="Q9NS98">
    <property type="expression patterns" value="baseline and differential"/>
</dbReference>
<dbReference type="GO" id="GO:0070062">
    <property type="term" value="C:extracellular exosome"/>
    <property type="evidence" value="ECO:0007005"/>
    <property type="project" value="UniProtKB"/>
</dbReference>
<dbReference type="GO" id="GO:0005886">
    <property type="term" value="C:plasma membrane"/>
    <property type="evidence" value="ECO:0000318"/>
    <property type="project" value="GO_Central"/>
</dbReference>
<dbReference type="GO" id="GO:0045499">
    <property type="term" value="F:chemorepellent activity"/>
    <property type="evidence" value="ECO:0000318"/>
    <property type="project" value="GO_Central"/>
</dbReference>
<dbReference type="GO" id="GO:0038191">
    <property type="term" value="F:neuropilin binding"/>
    <property type="evidence" value="ECO:0000318"/>
    <property type="project" value="GO_Central"/>
</dbReference>
<dbReference type="GO" id="GO:0030215">
    <property type="term" value="F:semaphorin receptor binding"/>
    <property type="evidence" value="ECO:0000318"/>
    <property type="project" value="GO_Central"/>
</dbReference>
<dbReference type="GO" id="GO:0005102">
    <property type="term" value="F:signaling receptor binding"/>
    <property type="evidence" value="ECO:0000250"/>
    <property type="project" value="UniProtKB"/>
</dbReference>
<dbReference type="GO" id="GO:0007411">
    <property type="term" value="P:axon guidance"/>
    <property type="evidence" value="ECO:0000318"/>
    <property type="project" value="GO_Central"/>
</dbReference>
<dbReference type="GO" id="GO:0050919">
    <property type="term" value="P:negative chemotaxis"/>
    <property type="evidence" value="ECO:0000318"/>
    <property type="project" value="GO_Central"/>
</dbReference>
<dbReference type="GO" id="GO:0030517">
    <property type="term" value="P:negative regulation of axon extension"/>
    <property type="evidence" value="ECO:0000250"/>
    <property type="project" value="UniProtKB"/>
</dbReference>
<dbReference type="GO" id="GO:0001755">
    <property type="term" value="P:neural crest cell migration"/>
    <property type="evidence" value="ECO:0000318"/>
    <property type="project" value="GO_Central"/>
</dbReference>
<dbReference type="GO" id="GO:0030335">
    <property type="term" value="P:positive regulation of cell migration"/>
    <property type="evidence" value="ECO:0000318"/>
    <property type="project" value="GO_Central"/>
</dbReference>
<dbReference type="GO" id="GO:0071526">
    <property type="term" value="P:semaphorin-plexin signaling pathway"/>
    <property type="evidence" value="ECO:0000318"/>
    <property type="project" value="GO_Central"/>
</dbReference>
<dbReference type="CDD" id="cd05871">
    <property type="entry name" value="Ig_Sema3"/>
    <property type="match status" value="1"/>
</dbReference>
<dbReference type="CDD" id="cd11255">
    <property type="entry name" value="Sema_3G"/>
    <property type="match status" value="1"/>
</dbReference>
<dbReference type="FunFam" id="2.130.10.10:FF:000015">
    <property type="entry name" value="Semaphorin 3B"/>
    <property type="match status" value="1"/>
</dbReference>
<dbReference type="FunFam" id="2.60.40.10:FF:000030">
    <property type="entry name" value="Semaphorin 3F like"/>
    <property type="match status" value="1"/>
</dbReference>
<dbReference type="FunFam" id="3.30.1680.10:FF:000001">
    <property type="entry name" value="Semaphorin 3F like"/>
    <property type="match status" value="1"/>
</dbReference>
<dbReference type="Gene3D" id="2.60.40.10">
    <property type="entry name" value="Immunoglobulins"/>
    <property type="match status" value="1"/>
</dbReference>
<dbReference type="Gene3D" id="3.30.1680.10">
    <property type="entry name" value="ligand-binding face of the semaphorins, domain 2"/>
    <property type="match status" value="1"/>
</dbReference>
<dbReference type="Gene3D" id="2.130.10.10">
    <property type="entry name" value="YVTN repeat-like/Quinoprotein amine dehydrogenase"/>
    <property type="match status" value="1"/>
</dbReference>
<dbReference type="InterPro" id="IPR007110">
    <property type="entry name" value="Ig-like_dom"/>
</dbReference>
<dbReference type="InterPro" id="IPR036179">
    <property type="entry name" value="Ig-like_dom_sf"/>
</dbReference>
<dbReference type="InterPro" id="IPR013783">
    <property type="entry name" value="Ig-like_fold"/>
</dbReference>
<dbReference type="InterPro" id="IPR013151">
    <property type="entry name" value="Immunoglobulin_dom"/>
</dbReference>
<dbReference type="InterPro" id="IPR016201">
    <property type="entry name" value="PSI"/>
</dbReference>
<dbReference type="InterPro" id="IPR001627">
    <property type="entry name" value="Semap_dom"/>
</dbReference>
<dbReference type="InterPro" id="IPR036352">
    <property type="entry name" value="Semap_dom_sf"/>
</dbReference>
<dbReference type="InterPro" id="IPR027231">
    <property type="entry name" value="Semaphorin"/>
</dbReference>
<dbReference type="InterPro" id="IPR015943">
    <property type="entry name" value="WD40/YVTN_repeat-like_dom_sf"/>
</dbReference>
<dbReference type="PANTHER" id="PTHR11036">
    <property type="entry name" value="SEMAPHORIN"/>
    <property type="match status" value="1"/>
</dbReference>
<dbReference type="PANTHER" id="PTHR11036:SF20">
    <property type="entry name" value="SEMAPHORIN-3G"/>
    <property type="match status" value="1"/>
</dbReference>
<dbReference type="Pfam" id="PF00047">
    <property type="entry name" value="ig"/>
    <property type="match status" value="1"/>
</dbReference>
<dbReference type="Pfam" id="PF01403">
    <property type="entry name" value="Sema"/>
    <property type="match status" value="1"/>
</dbReference>
<dbReference type="SMART" id="SM00423">
    <property type="entry name" value="PSI"/>
    <property type="match status" value="1"/>
</dbReference>
<dbReference type="SMART" id="SM00630">
    <property type="entry name" value="Sema"/>
    <property type="match status" value="1"/>
</dbReference>
<dbReference type="SUPFAM" id="SSF48726">
    <property type="entry name" value="Immunoglobulin"/>
    <property type="match status" value="1"/>
</dbReference>
<dbReference type="SUPFAM" id="SSF103575">
    <property type="entry name" value="Plexin repeat"/>
    <property type="match status" value="1"/>
</dbReference>
<dbReference type="SUPFAM" id="SSF101912">
    <property type="entry name" value="Sema domain"/>
    <property type="match status" value="1"/>
</dbReference>
<dbReference type="PROSITE" id="PS50835">
    <property type="entry name" value="IG_LIKE"/>
    <property type="match status" value="1"/>
</dbReference>
<dbReference type="PROSITE" id="PS51004">
    <property type="entry name" value="SEMA"/>
    <property type="match status" value="1"/>
</dbReference>
<keyword id="KW-1015">Disulfide bond</keyword>
<keyword id="KW-0325">Glycoprotein</keyword>
<keyword id="KW-0393">Immunoglobulin domain</keyword>
<keyword id="KW-1267">Proteomics identification</keyword>
<keyword id="KW-1185">Reference proteome</keyword>
<keyword id="KW-0964">Secreted</keyword>
<keyword id="KW-0732">Signal</keyword>
<name>SEM3G_HUMAN</name>
<proteinExistence type="evidence at protein level"/>
<feature type="signal peptide" evidence="2">
    <location>
        <begin position="1"/>
        <end position="22"/>
    </location>
</feature>
<feature type="chain" id="PRO_0000257791" description="Semaphorin-3G">
    <location>
        <begin position="23"/>
        <end position="782"/>
    </location>
</feature>
<feature type="domain" description="Sema" evidence="3">
    <location>
        <begin position="32"/>
        <end position="519"/>
    </location>
</feature>
<feature type="domain" description="Ig-like C2-type">
    <location>
        <begin position="569"/>
        <end position="671"/>
    </location>
</feature>
<feature type="glycosylation site" description="N-linked (GlcNAc...) asparagine" evidence="2">
    <location>
        <position position="44"/>
    </location>
</feature>
<feature type="glycosylation site" description="N-linked (GlcNAc...) asparagine" evidence="2">
    <location>
        <position position="127"/>
    </location>
</feature>
<feature type="disulfide bond" evidence="1">
    <location>
        <begin position="105"/>
        <end position="116"/>
    </location>
</feature>
<feature type="disulfide bond" evidence="1">
    <location>
        <begin position="134"/>
        <end position="143"/>
    </location>
</feature>
<feature type="disulfide bond" evidence="1">
    <location>
        <begin position="270"/>
        <end position="382"/>
    </location>
</feature>
<feature type="disulfide bond" evidence="1">
    <location>
        <begin position="294"/>
        <end position="342"/>
    </location>
</feature>
<feature type="disulfide bond" evidence="1">
    <location>
        <begin position="522"/>
        <end position="540"/>
    </location>
</feature>
<feature type="disulfide bond" evidence="1">
    <location>
        <begin position="603"/>
        <end position="655"/>
    </location>
</feature>
<feature type="sequence variant" id="VAR_051929" description="In dbSNP:rs35811072.">
    <original>S</original>
    <variation>N</variation>
    <location>
        <position position="180"/>
    </location>
</feature>
<feature type="sequence variant" id="VAR_030292" description="In dbSNP:rs2276833.">
    <original>I</original>
    <variation>T</variation>
    <location>
        <position position="232"/>
    </location>
</feature>
<feature type="sequence variant" id="VAR_051930" description="In dbSNP:rs34540591.">
    <original>V</original>
    <variation>I</variation>
    <location>
        <position position="332"/>
    </location>
</feature>